<comment type="subcellular location">
    <subcellularLocation>
        <location evidence="2">Cell membrane</location>
        <topology evidence="2">Multi-pass membrane protein</topology>
    </subcellularLocation>
</comment>
<comment type="similarity">
    <text evidence="2">Belongs to the cytochrome c oxidase subunit 2 family.</text>
</comment>
<comment type="sequence caution" evidence="2">
    <conflict type="erroneous initiation">
        <sequence resource="EMBL-CDS" id="BAA79770"/>
    </conflict>
</comment>
<feature type="chain" id="PRO_0000183723" description="Heme-copper oxidase subunit 2">
    <location>
        <begin position="1"/>
        <end position="234"/>
    </location>
</feature>
<feature type="transmembrane region" description="Helical" evidence="1">
    <location>
        <begin position="13"/>
        <end position="33"/>
    </location>
</feature>
<feature type="transmembrane region" description="Helical" evidence="1">
    <location>
        <begin position="72"/>
        <end position="92"/>
    </location>
</feature>
<feature type="binding site" evidence="2">
    <location>
        <position position="151"/>
    </location>
    <ligand>
        <name>Cu cation</name>
        <dbReference type="ChEBI" id="CHEBI:23378"/>
        <label>A</label>
    </ligand>
</feature>
<feature type="binding site" evidence="2">
    <location>
        <position position="188"/>
    </location>
    <ligand>
        <name>Cu cation</name>
        <dbReference type="ChEBI" id="CHEBI:23378"/>
        <label>A</label>
    </ligand>
</feature>
<feature type="binding site" evidence="2">
    <location>
        <position position="192"/>
    </location>
    <ligand>
        <name>Cu cation</name>
        <dbReference type="ChEBI" id="CHEBI:23378"/>
        <label>A</label>
    </ligand>
</feature>
<feature type="binding site" evidence="2">
    <location>
        <position position="196"/>
    </location>
    <ligand>
        <name>Cu cation</name>
        <dbReference type="ChEBI" id="CHEBI:23378"/>
        <label>A</label>
    </ligand>
</feature>
<protein>
    <recommendedName>
        <fullName>Heme-copper oxidase subunit 2</fullName>
        <ecNumber>1.9.3.-</ecNumber>
    </recommendedName>
    <alternativeName>
        <fullName>Heme-copper oxidase subunit II</fullName>
    </alternativeName>
</protein>
<evidence type="ECO:0000255" key="1"/>
<evidence type="ECO:0000305" key="2"/>
<name>AOX2_AERPE</name>
<organism>
    <name type="scientific">Aeropyrum pernix (strain ATCC 700893 / DSM 11879 / JCM 9820 / NBRC 100138 / K1)</name>
    <dbReference type="NCBI Taxonomy" id="272557"/>
    <lineage>
        <taxon>Archaea</taxon>
        <taxon>Thermoproteota</taxon>
        <taxon>Thermoprotei</taxon>
        <taxon>Desulfurococcales</taxon>
        <taxon>Desulfurococcaceae</taxon>
        <taxon>Aeropyrum</taxon>
    </lineage>
</organism>
<accession>Q9YDX7</accession>
<proteinExistence type="inferred from homology"/>
<keyword id="KW-1003">Cell membrane</keyword>
<keyword id="KW-0186">Copper</keyword>
<keyword id="KW-0249">Electron transport</keyword>
<keyword id="KW-0472">Membrane</keyword>
<keyword id="KW-0479">Metal-binding</keyword>
<keyword id="KW-0560">Oxidoreductase</keyword>
<keyword id="KW-1185">Reference proteome</keyword>
<keyword id="KW-0679">Respiratory chain</keyword>
<keyword id="KW-0812">Transmembrane</keyword>
<keyword id="KW-1133">Transmembrane helix</keyword>
<keyword id="KW-0813">Transport</keyword>
<dbReference type="EC" id="1.9.3.-"/>
<dbReference type="EMBL" id="AB020482">
    <property type="protein sequence ID" value="BAA86071.1"/>
    <property type="molecule type" value="Genomic_DNA"/>
</dbReference>
<dbReference type="EMBL" id="BA000002">
    <property type="protein sequence ID" value="BAA79770.2"/>
    <property type="status" value="ALT_INIT"/>
    <property type="molecule type" value="Genomic_DNA"/>
</dbReference>
<dbReference type="PIR" id="B72671">
    <property type="entry name" value="B72671"/>
</dbReference>
<dbReference type="RefSeq" id="WP_241759727.1">
    <property type="nucleotide sequence ID" value="NC_000854.2"/>
</dbReference>
<dbReference type="SMR" id="Q9YDX7"/>
<dbReference type="STRING" id="272557.APE_0792.1"/>
<dbReference type="EnsemblBacteria" id="BAA79770">
    <property type="protein sequence ID" value="BAA79770"/>
    <property type="gene ID" value="APE_0792.1"/>
</dbReference>
<dbReference type="GeneID" id="1444902"/>
<dbReference type="KEGG" id="ape:APE_0792.1"/>
<dbReference type="eggNOG" id="arCOG01235">
    <property type="taxonomic scope" value="Archaea"/>
</dbReference>
<dbReference type="Proteomes" id="UP000002518">
    <property type="component" value="Chromosome"/>
</dbReference>
<dbReference type="GO" id="GO:0005886">
    <property type="term" value="C:plasma membrane"/>
    <property type="evidence" value="ECO:0007669"/>
    <property type="project" value="UniProtKB-SubCell"/>
</dbReference>
<dbReference type="GO" id="GO:0005507">
    <property type="term" value="F:copper ion binding"/>
    <property type="evidence" value="ECO:0007669"/>
    <property type="project" value="InterPro"/>
</dbReference>
<dbReference type="GO" id="GO:0004129">
    <property type="term" value="F:cytochrome-c oxidase activity"/>
    <property type="evidence" value="ECO:0007669"/>
    <property type="project" value="InterPro"/>
</dbReference>
<dbReference type="GO" id="GO:0042773">
    <property type="term" value="P:ATP synthesis coupled electron transport"/>
    <property type="evidence" value="ECO:0007669"/>
    <property type="project" value="TreeGrafter"/>
</dbReference>
<dbReference type="CDD" id="cd13918">
    <property type="entry name" value="CuRO_HCO_II_like_6"/>
    <property type="match status" value="1"/>
</dbReference>
<dbReference type="Gene3D" id="2.60.40.420">
    <property type="entry name" value="Cupredoxins - blue copper proteins"/>
    <property type="match status" value="1"/>
</dbReference>
<dbReference type="InterPro" id="IPR045187">
    <property type="entry name" value="CcO_II"/>
</dbReference>
<dbReference type="InterPro" id="IPR002429">
    <property type="entry name" value="CcO_II-like_C"/>
</dbReference>
<dbReference type="InterPro" id="IPR001505">
    <property type="entry name" value="Copper_CuA"/>
</dbReference>
<dbReference type="InterPro" id="IPR008972">
    <property type="entry name" value="Cupredoxin"/>
</dbReference>
<dbReference type="InterPro" id="IPR014222">
    <property type="entry name" value="Cyt_c_oxidase_su2"/>
</dbReference>
<dbReference type="NCBIfam" id="TIGR02866">
    <property type="entry name" value="CoxB"/>
    <property type="match status" value="1"/>
</dbReference>
<dbReference type="PANTHER" id="PTHR22888:SF9">
    <property type="entry name" value="CYTOCHROME C OXIDASE SUBUNIT 2"/>
    <property type="match status" value="1"/>
</dbReference>
<dbReference type="PANTHER" id="PTHR22888">
    <property type="entry name" value="CYTOCHROME C OXIDASE, SUBUNIT II"/>
    <property type="match status" value="1"/>
</dbReference>
<dbReference type="Pfam" id="PF00116">
    <property type="entry name" value="COX2"/>
    <property type="match status" value="1"/>
</dbReference>
<dbReference type="SUPFAM" id="SSF49503">
    <property type="entry name" value="Cupredoxins"/>
    <property type="match status" value="1"/>
</dbReference>
<dbReference type="PROSITE" id="PS00078">
    <property type="entry name" value="COX2"/>
    <property type="match status" value="1"/>
</dbReference>
<dbReference type="PROSITE" id="PS50857">
    <property type="entry name" value="COX2_CUA"/>
    <property type="match status" value="1"/>
</dbReference>
<gene>
    <name type="primary">aoxA</name>
    <name type="ordered locus">APE_0792.1</name>
</gene>
<reference key="1">
    <citation type="submission" date="1998-11" db="EMBL/GenBank/DDBJ databases">
        <title>Heme-copper-oxidase.</title>
        <authorList>
            <person name="Wakagi T."/>
            <person name="Ishikawa R."/>
        </authorList>
    </citation>
    <scope>NUCLEOTIDE SEQUENCE [GENOMIC DNA]</scope>
    <source>
        <strain>ATCC 700893 / DSM 11879 / JCM 9820 / NBRC 100138 / K1</strain>
    </source>
</reference>
<reference key="2">
    <citation type="journal article" date="1999" name="DNA Res.">
        <title>Complete genome sequence of an aerobic hyper-thermophilic crenarchaeon, Aeropyrum pernix K1.</title>
        <authorList>
            <person name="Kawarabayasi Y."/>
            <person name="Hino Y."/>
            <person name="Horikawa H."/>
            <person name="Yamazaki S."/>
            <person name="Haikawa Y."/>
            <person name="Jin-no K."/>
            <person name="Takahashi M."/>
            <person name="Sekine M."/>
            <person name="Baba S."/>
            <person name="Ankai A."/>
            <person name="Kosugi H."/>
            <person name="Hosoyama A."/>
            <person name="Fukui S."/>
            <person name="Nagai Y."/>
            <person name="Nishijima K."/>
            <person name="Nakazawa H."/>
            <person name="Takamiya M."/>
            <person name="Masuda S."/>
            <person name="Funahashi T."/>
            <person name="Tanaka T."/>
            <person name="Kudoh Y."/>
            <person name="Yamazaki J."/>
            <person name="Kushida N."/>
            <person name="Oguchi A."/>
            <person name="Aoki K."/>
            <person name="Kubota K."/>
            <person name="Nakamura Y."/>
            <person name="Nomura N."/>
            <person name="Sako Y."/>
            <person name="Kikuchi H."/>
        </authorList>
    </citation>
    <scope>NUCLEOTIDE SEQUENCE [LARGE SCALE GENOMIC DNA]</scope>
    <source>
        <strain>ATCC 700893 / DSM 11879 / JCM 9820 / NBRC 100138 / K1</strain>
    </source>
</reference>
<sequence>MDVIPTEAIWWRLFLLFTAVGVLAAGTVTAFFIYSLFKYRSSGQALGEDQGTAGRIYRIMVESPVSGKSKYLLFVTGIIVMGLIVATIDETLYLEKSPPVEDALVVMVIGFQFGWQFEYSVGGETVTTLNYLVVPSDTLIEFRVTSRDVFHAFGIPEFKNKIDAIPGILNSMWIKTPDEPGKVYNAYCYELCGIGHSLMVGKVIVVDKEEFYNAYNSGPDVFSEYVNNVISKYK</sequence>